<keyword id="KW-0378">Hydrolase</keyword>
<keyword id="KW-0460">Magnesium</keyword>
<keyword id="KW-0479">Metal-binding</keyword>
<keyword id="KW-0540">Nuclease</keyword>
<keyword id="KW-1185">Reference proteome</keyword>
<keyword id="KW-1277">Toxin-antitoxin system</keyword>
<name>VPC33_MYCTO</name>
<accession>P9WF68</accession>
<accession>L0T924</accession>
<accession>O50457</accession>
<accession>Q7D8J3</accession>
<comment type="function">
    <text evidence="1">Toxic component of a type II toxin-antitoxin (TA) system. An RNase. Its toxic effect is neutralized by coexpression with cognate antitoxin VapB33 (By similarity).</text>
</comment>
<comment type="cofactor">
    <cofactor evidence="1">
        <name>Mg(2+)</name>
        <dbReference type="ChEBI" id="CHEBI:18420"/>
    </cofactor>
</comment>
<comment type="similarity">
    <text evidence="1">Belongs to the PINc/VapC protein family.</text>
</comment>
<protein>
    <recommendedName>
        <fullName evidence="1">Ribonuclease VapC33</fullName>
        <shortName evidence="1">RNase VapC33</shortName>
        <ecNumber evidence="1">3.1.-.-</ecNumber>
    </recommendedName>
    <alternativeName>
        <fullName evidence="1">Toxin VapC33</fullName>
    </alternativeName>
</protein>
<evidence type="ECO:0000255" key="1">
    <source>
        <dbReference type="HAMAP-Rule" id="MF_00265"/>
    </source>
</evidence>
<gene>
    <name evidence="1" type="primary">vapC33</name>
    <name type="ordered locus">MT1280</name>
</gene>
<feature type="chain" id="PRO_0000428591" description="Ribonuclease VapC33">
    <location>
        <begin position="1"/>
        <end position="143"/>
    </location>
</feature>
<feature type="binding site" evidence="1">
    <location>
        <position position="5"/>
    </location>
    <ligand>
        <name>Mg(2+)</name>
        <dbReference type="ChEBI" id="CHEBI:18420"/>
    </ligand>
</feature>
<feature type="binding site" evidence="1">
    <location>
        <position position="108"/>
    </location>
    <ligand>
        <name>Mg(2+)</name>
        <dbReference type="ChEBI" id="CHEBI:18420"/>
    </ligand>
</feature>
<reference key="1">
    <citation type="journal article" date="2002" name="J. Bacteriol.">
        <title>Whole-genome comparison of Mycobacterium tuberculosis clinical and laboratory strains.</title>
        <authorList>
            <person name="Fleischmann R.D."/>
            <person name="Alland D."/>
            <person name="Eisen J.A."/>
            <person name="Carpenter L."/>
            <person name="White O."/>
            <person name="Peterson J.D."/>
            <person name="DeBoy R.T."/>
            <person name="Dodson R.J."/>
            <person name="Gwinn M.L."/>
            <person name="Haft D.H."/>
            <person name="Hickey E.K."/>
            <person name="Kolonay J.F."/>
            <person name="Nelson W.C."/>
            <person name="Umayam L.A."/>
            <person name="Ermolaeva M.D."/>
            <person name="Salzberg S.L."/>
            <person name="Delcher A."/>
            <person name="Utterback T.R."/>
            <person name="Weidman J.F."/>
            <person name="Khouri H.M."/>
            <person name="Gill J."/>
            <person name="Mikula A."/>
            <person name="Bishai W."/>
            <person name="Jacobs W.R. Jr."/>
            <person name="Venter J.C."/>
            <person name="Fraser C.M."/>
        </authorList>
    </citation>
    <scope>NUCLEOTIDE SEQUENCE [LARGE SCALE GENOMIC DNA]</scope>
    <source>
        <strain>CDC 1551 / Oshkosh</strain>
    </source>
</reference>
<organism>
    <name type="scientific">Mycobacterium tuberculosis (strain CDC 1551 / Oshkosh)</name>
    <dbReference type="NCBI Taxonomy" id="83331"/>
    <lineage>
        <taxon>Bacteria</taxon>
        <taxon>Bacillati</taxon>
        <taxon>Actinomycetota</taxon>
        <taxon>Actinomycetes</taxon>
        <taxon>Mycobacteriales</taxon>
        <taxon>Mycobacteriaceae</taxon>
        <taxon>Mycobacterium</taxon>
        <taxon>Mycobacterium tuberculosis complex</taxon>
    </lineage>
</organism>
<dbReference type="EC" id="3.1.-.-" evidence="1"/>
<dbReference type="EMBL" id="AE000516">
    <property type="protein sequence ID" value="AAK45538.1"/>
    <property type="molecule type" value="Genomic_DNA"/>
</dbReference>
<dbReference type="PIR" id="A70953">
    <property type="entry name" value="A70953"/>
</dbReference>
<dbReference type="RefSeq" id="WP_003406304.1">
    <property type="nucleotide sequence ID" value="NZ_KK341227.1"/>
</dbReference>
<dbReference type="SMR" id="P9WF68"/>
<dbReference type="KEGG" id="mtc:MT1280"/>
<dbReference type="PATRIC" id="fig|83331.31.peg.1383"/>
<dbReference type="HOGENOM" id="CLU_146668_1_0_11"/>
<dbReference type="Proteomes" id="UP000001020">
    <property type="component" value="Chromosome"/>
</dbReference>
<dbReference type="GO" id="GO:0000287">
    <property type="term" value="F:magnesium ion binding"/>
    <property type="evidence" value="ECO:0007669"/>
    <property type="project" value="UniProtKB-UniRule"/>
</dbReference>
<dbReference type="GO" id="GO:0004540">
    <property type="term" value="F:RNA nuclease activity"/>
    <property type="evidence" value="ECO:0007669"/>
    <property type="project" value="InterPro"/>
</dbReference>
<dbReference type="GO" id="GO:0045926">
    <property type="term" value="P:negative regulation of growth"/>
    <property type="evidence" value="ECO:0007669"/>
    <property type="project" value="UniProtKB-ARBA"/>
</dbReference>
<dbReference type="CDD" id="cd18678">
    <property type="entry name" value="PIN_MtVapC25_VapC33-like"/>
    <property type="match status" value="1"/>
</dbReference>
<dbReference type="HAMAP" id="MF_00265">
    <property type="entry name" value="VapC_Nob1"/>
    <property type="match status" value="1"/>
</dbReference>
<dbReference type="InterPro" id="IPR006226">
    <property type="entry name" value="Mtu_PIN"/>
</dbReference>
<dbReference type="InterPro" id="IPR029060">
    <property type="entry name" value="PIN-like_dom_sf"/>
</dbReference>
<dbReference type="InterPro" id="IPR002716">
    <property type="entry name" value="PIN_dom"/>
</dbReference>
<dbReference type="InterPro" id="IPR022907">
    <property type="entry name" value="VapC_family"/>
</dbReference>
<dbReference type="NCBIfam" id="TIGR00028">
    <property type="entry name" value="Mtu_PIN_fam"/>
    <property type="match status" value="1"/>
</dbReference>
<dbReference type="Pfam" id="PF01850">
    <property type="entry name" value="PIN"/>
    <property type="match status" value="1"/>
</dbReference>
<dbReference type="SUPFAM" id="SSF88723">
    <property type="entry name" value="PIN domain-like"/>
    <property type="match status" value="1"/>
</dbReference>
<sequence>MIIPDINLLLYAVITGFPQHRRAHAWWQDTVNGHTRIGLTYPALFGFLRIATSARVLAAPLPTADAIAYVREWLSQPNVDLLTAGPRHLDIALGLLDKLGTASHLTTDVQLAAYGIEYDAEIHSSDTDFARFADLKWTDPLRE</sequence>
<proteinExistence type="inferred from homology"/>